<organism>
    <name type="scientific">Pyrococcus horikoshii (strain ATCC 700860 / DSM 12428 / JCM 9974 / NBRC 100139 / OT-3)</name>
    <dbReference type="NCBI Taxonomy" id="70601"/>
    <lineage>
        <taxon>Archaea</taxon>
        <taxon>Methanobacteriati</taxon>
        <taxon>Methanobacteriota</taxon>
        <taxon>Thermococci</taxon>
        <taxon>Thermococcales</taxon>
        <taxon>Thermococcaceae</taxon>
        <taxon>Pyrococcus</taxon>
    </lineage>
</organism>
<feature type="chain" id="PRO_0000122182" description="Serine--tRNA ligase">
    <location>
        <begin position="1"/>
        <end position="455"/>
    </location>
</feature>
<feature type="binding site" evidence="1">
    <location>
        <begin position="252"/>
        <end position="254"/>
    </location>
    <ligand>
        <name>L-serine</name>
        <dbReference type="ChEBI" id="CHEBI:33384"/>
    </ligand>
</feature>
<feature type="binding site" evidence="1">
    <location>
        <begin position="283"/>
        <end position="285"/>
    </location>
    <ligand>
        <name>ATP</name>
        <dbReference type="ChEBI" id="CHEBI:30616"/>
    </ligand>
</feature>
<feature type="binding site" evidence="1">
    <location>
        <position position="299"/>
    </location>
    <ligand>
        <name>ATP</name>
        <dbReference type="ChEBI" id="CHEBI:30616"/>
    </ligand>
</feature>
<feature type="binding site" evidence="1">
    <location>
        <position position="306"/>
    </location>
    <ligand>
        <name>L-serine</name>
        <dbReference type="ChEBI" id="CHEBI:33384"/>
    </ligand>
</feature>
<feature type="binding site" evidence="1">
    <location>
        <begin position="370"/>
        <end position="373"/>
    </location>
    <ligand>
        <name>ATP</name>
        <dbReference type="ChEBI" id="CHEBI:30616"/>
    </ligand>
</feature>
<feature type="binding site" evidence="1">
    <location>
        <position position="406"/>
    </location>
    <ligand>
        <name>L-serine</name>
        <dbReference type="ChEBI" id="CHEBI:33384"/>
    </ligand>
</feature>
<feature type="helix" evidence="3">
    <location>
        <begin position="4"/>
        <end position="9"/>
    </location>
</feature>
<feature type="helix" evidence="3">
    <location>
        <begin position="11"/>
        <end position="21"/>
    </location>
</feature>
<feature type="helix" evidence="3">
    <location>
        <begin position="24"/>
        <end position="28"/>
    </location>
</feature>
<feature type="helix" evidence="3">
    <location>
        <begin position="29"/>
        <end position="65"/>
    </location>
</feature>
<feature type="helix" evidence="3">
    <location>
        <begin position="72"/>
        <end position="103"/>
    </location>
</feature>
<feature type="helix" evidence="3">
    <location>
        <begin position="120"/>
        <end position="122"/>
    </location>
</feature>
<feature type="strand" evidence="3">
    <location>
        <begin position="124"/>
        <end position="130"/>
    </location>
</feature>
<feature type="strand" evidence="3">
    <location>
        <begin position="132"/>
        <end position="135"/>
    </location>
</feature>
<feature type="helix" evidence="3">
    <location>
        <begin position="136"/>
        <end position="138"/>
    </location>
</feature>
<feature type="helix" evidence="3">
    <location>
        <begin position="139"/>
        <end position="146"/>
    </location>
</feature>
<feature type="strand" evidence="3">
    <location>
        <begin position="152"/>
        <end position="157"/>
    </location>
</feature>
<feature type="helix" evidence="3">
    <location>
        <begin position="162"/>
        <end position="168"/>
    </location>
</feature>
<feature type="strand" evidence="3">
    <location>
        <begin position="172"/>
        <end position="174"/>
    </location>
</feature>
<feature type="helix" evidence="3">
    <location>
        <begin position="175"/>
        <end position="180"/>
    </location>
</feature>
<feature type="strand" evidence="3">
    <location>
        <begin position="187"/>
        <end position="189"/>
    </location>
</feature>
<feature type="helix" evidence="3">
    <location>
        <begin position="190"/>
        <end position="209"/>
    </location>
</feature>
<feature type="strand" evidence="3">
    <location>
        <begin position="213"/>
        <end position="216"/>
    </location>
</feature>
<feature type="strand" evidence="3">
    <location>
        <begin position="219"/>
        <end position="221"/>
    </location>
</feature>
<feature type="helix" evidence="3">
    <location>
        <begin position="223"/>
        <end position="227"/>
    </location>
</feature>
<feature type="helix" evidence="3">
    <location>
        <begin position="234"/>
        <end position="237"/>
    </location>
</feature>
<feature type="strand" evidence="4">
    <location>
        <begin position="240"/>
        <end position="242"/>
    </location>
</feature>
<feature type="helix" evidence="3">
    <location>
        <begin position="254"/>
        <end position="259"/>
    </location>
</feature>
<feature type="turn" evidence="3">
    <location>
        <begin position="260"/>
        <end position="263"/>
    </location>
</feature>
<feature type="strand" evidence="3">
    <location>
        <begin position="264"/>
        <end position="267"/>
    </location>
</feature>
<feature type="turn" evidence="3">
    <location>
        <begin position="268"/>
        <end position="270"/>
    </location>
</feature>
<feature type="strand" evidence="3">
    <location>
        <begin position="272"/>
        <end position="282"/>
    </location>
</feature>
<feature type="strand" evidence="4">
    <location>
        <begin position="289"/>
        <end position="292"/>
    </location>
</feature>
<feature type="strand" evidence="3">
    <location>
        <begin position="295"/>
        <end position="298"/>
    </location>
</feature>
<feature type="strand" evidence="3">
    <location>
        <begin position="300"/>
        <end position="311"/>
    </location>
</feature>
<feature type="turn" evidence="3">
    <location>
        <begin position="313"/>
        <end position="315"/>
    </location>
</feature>
<feature type="helix" evidence="3">
    <location>
        <begin position="316"/>
        <end position="333"/>
    </location>
</feature>
<feature type="strand" evidence="3">
    <location>
        <begin position="338"/>
        <end position="342"/>
    </location>
</feature>
<feature type="helix" evidence="3">
    <location>
        <begin position="345"/>
        <end position="347"/>
    </location>
</feature>
<feature type="strand" evidence="3">
    <location>
        <begin position="353"/>
        <end position="362"/>
    </location>
</feature>
<feature type="turn" evidence="3">
    <location>
        <begin position="363"/>
        <end position="366"/>
    </location>
</feature>
<feature type="strand" evidence="3">
    <location>
        <begin position="367"/>
        <end position="376"/>
    </location>
</feature>
<feature type="turn" evidence="3">
    <location>
        <begin position="378"/>
        <end position="381"/>
    </location>
</feature>
<feature type="helix" evidence="3">
    <location>
        <begin position="382"/>
        <end position="385"/>
    </location>
</feature>
<feature type="strand" evidence="3">
    <location>
        <begin position="387"/>
        <end position="392"/>
    </location>
</feature>
<feature type="strand" evidence="3">
    <location>
        <begin position="401"/>
        <end position="409"/>
    </location>
</feature>
<feature type="helix" evidence="3">
    <location>
        <begin position="410"/>
        <end position="420"/>
    </location>
</feature>
<feature type="helix" evidence="3">
    <location>
        <begin position="432"/>
        <end position="434"/>
    </location>
</feature>
<feature type="helix" evidence="3">
    <location>
        <begin position="435"/>
        <end position="438"/>
    </location>
</feature>
<feature type="strand" evidence="3">
    <location>
        <begin position="441"/>
        <end position="443"/>
    </location>
</feature>
<evidence type="ECO:0000255" key="1">
    <source>
        <dbReference type="HAMAP-Rule" id="MF_00176"/>
    </source>
</evidence>
<evidence type="ECO:0000305" key="2"/>
<evidence type="ECO:0007829" key="3">
    <source>
        <dbReference type="PDB" id="2DQ0"/>
    </source>
</evidence>
<evidence type="ECO:0007829" key="4">
    <source>
        <dbReference type="PDB" id="2ZR3"/>
    </source>
</evidence>
<name>SYS_PYRHO</name>
<protein>
    <recommendedName>
        <fullName evidence="1">Serine--tRNA ligase</fullName>
        <ecNumber evidence="1">6.1.1.11</ecNumber>
    </recommendedName>
    <alternativeName>
        <fullName evidence="1">Seryl-tRNA synthetase</fullName>
        <shortName evidence="1">SerRS</shortName>
    </alternativeName>
    <alternativeName>
        <fullName evidence="1">Seryl-tRNA(Ser/Sec) synthetase</fullName>
    </alternativeName>
</protein>
<reference key="1">
    <citation type="journal article" date="1998" name="DNA Res.">
        <title>Complete sequence and gene organization of the genome of a hyper-thermophilic archaebacterium, Pyrococcus horikoshii OT3.</title>
        <authorList>
            <person name="Kawarabayasi Y."/>
            <person name="Sawada M."/>
            <person name="Horikawa H."/>
            <person name="Haikawa Y."/>
            <person name="Hino Y."/>
            <person name="Yamamoto S."/>
            <person name="Sekine M."/>
            <person name="Baba S."/>
            <person name="Kosugi H."/>
            <person name="Hosoyama A."/>
            <person name="Nagai Y."/>
            <person name="Sakai M."/>
            <person name="Ogura K."/>
            <person name="Otsuka R."/>
            <person name="Nakazawa H."/>
            <person name="Takamiya M."/>
            <person name="Ohfuku Y."/>
            <person name="Funahashi T."/>
            <person name="Tanaka T."/>
            <person name="Kudoh Y."/>
            <person name="Yamazaki J."/>
            <person name="Kushida N."/>
            <person name="Oguchi A."/>
            <person name="Aoki K."/>
            <person name="Yoshizawa T."/>
            <person name="Nakamura Y."/>
            <person name="Robb F.T."/>
            <person name="Horikoshi K."/>
            <person name="Masuchi Y."/>
            <person name="Shizuya H."/>
            <person name="Kikuchi H."/>
        </authorList>
    </citation>
    <scope>NUCLEOTIDE SEQUENCE [LARGE SCALE GENOMIC DNA]</scope>
    <source>
        <strain>ATCC 700860 / DSM 12428 / JCM 9974 / NBRC 100139 / OT-3</strain>
    </source>
</reference>
<reference key="2">
    <citation type="submission" date="2007-06" db="PDB data bank">
        <title>Crystal structure of PH0710.</title>
        <authorList>
            <consortium name="RIKEN structural genomics initiative (RSGI)"/>
        </authorList>
    </citation>
    <scope>X-RAY CRYSTALLOGRAPHY (3.0 ANGSTROMS)</scope>
</reference>
<keyword id="KW-0002">3D-structure</keyword>
<keyword id="KW-0030">Aminoacyl-tRNA synthetase</keyword>
<keyword id="KW-0067">ATP-binding</keyword>
<keyword id="KW-0963">Cytoplasm</keyword>
<keyword id="KW-0436">Ligase</keyword>
<keyword id="KW-0547">Nucleotide-binding</keyword>
<keyword id="KW-0648">Protein biosynthesis</keyword>
<proteinExistence type="evidence at protein level"/>
<accession>O58441</accession>
<sequence>MLDIKLIRENPELVKNDLIKRGELEKVKWVDEILKLDTEWRTKLKEINRLRHERNKIAVEIGKRRKKGEPVDELLAKSREIVKRIGELENEVEELKKKIDYYLWRLPNITHPSVPVGKDENDNVPIRFWGKARVWKGHLERFLEQSQGKMEYEILEWKPKLHVDLLEILGGADFARAAKVSGSRFYYLLNEIVILDLALIRFALDRLIEKGFTPVIPPYMVRRFVEEGSTSFEDFEDVIYKVEDEDLYLIPTAEHPLAGMHANEILDGKDLPLLYVGVSPCFRKEAGTAGKDTKGIFRVHQFHKVEQFVYSRPEESWEWHEKIIRNAEELFQELEIPYRVVNICTGDLGYVAAKKYDIEAWMPGQGKFREVVSASNCTDWQARRLNIRFRDRTDEKPRYVHTLNSTAIATSRAIVAILENHQEEDGTVRIPKVLWKYTGFKEIVPVEKKERCCAT</sequence>
<dbReference type="EC" id="6.1.1.11" evidence="1"/>
<dbReference type="EMBL" id="BA000001">
    <property type="protein sequence ID" value="BAA29801.1"/>
    <property type="status" value="ALT_INIT"/>
    <property type="molecule type" value="Genomic_DNA"/>
</dbReference>
<dbReference type="PIR" id="G71117">
    <property type="entry name" value="G71117"/>
</dbReference>
<dbReference type="RefSeq" id="WP_048053201.1">
    <property type="nucleotide sequence ID" value="NC_000961.1"/>
</dbReference>
<dbReference type="PDB" id="2DQ0">
    <property type="method" value="X-ray"/>
    <property type="resolution" value="2.60 A"/>
    <property type="chains" value="A/B=1-455"/>
</dbReference>
<dbReference type="PDB" id="2ZR2">
    <property type="method" value="X-ray"/>
    <property type="resolution" value="2.80 A"/>
    <property type="chains" value="A/B=1-455"/>
</dbReference>
<dbReference type="PDB" id="2ZR3">
    <property type="method" value="X-ray"/>
    <property type="resolution" value="3.00 A"/>
    <property type="chains" value="A/B=1-455"/>
</dbReference>
<dbReference type="PDBsum" id="2DQ0"/>
<dbReference type="PDBsum" id="2ZR2"/>
<dbReference type="PDBsum" id="2ZR3"/>
<dbReference type="SMR" id="O58441"/>
<dbReference type="STRING" id="70601.gene:9377657"/>
<dbReference type="EnsemblBacteria" id="BAA29801">
    <property type="protein sequence ID" value="BAA29801"/>
    <property type="gene ID" value="BAA29801"/>
</dbReference>
<dbReference type="GeneID" id="1443040"/>
<dbReference type="KEGG" id="pho:PH0710"/>
<dbReference type="eggNOG" id="arCOG00403">
    <property type="taxonomic scope" value="Archaea"/>
</dbReference>
<dbReference type="OrthoDB" id="35932at2157"/>
<dbReference type="BRENDA" id="6.1.1.11">
    <property type="organism ID" value="5244"/>
</dbReference>
<dbReference type="UniPathway" id="UPA00906">
    <property type="reaction ID" value="UER00895"/>
</dbReference>
<dbReference type="EvolutionaryTrace" id="O58441"/>
<dbReference type="Proteomes" id="UP000000752">
    <property type="component" value="Chromosome"/>
</dbReference>
<dbReference type="GO" id="GO:0005737">
    <property type="term" value="C:cytoplasm"/>
    <property type="evidence" value="ECO:0007669"/>
    <property type="project" value="UniProtKB-SubCell"/>
</dbReference>
<dbReference type="GO" id="GO:0005524">
    <property type="term" value="F:ATP binding"/>
    <property type="evidence" value="ECO:0007669"/>
    <property type="project" value="UniProtKB-UniRule"/>
</dbReference>
<dbReference type="GO" id="GO:0004828">
    <property type="term" value="F:serine-tRNA ligase activity"/>
    <property type="evidence" value="ECO:0007669"/>
    <property type="project" value="UniProtKB-UniRule"/>
</dbReference>
<dbReference type="GO" id="GO:0016260">
    <property type="term" value="P:selenocysteine biosynthetic process"/>
    <property type="evidence" value="ECO:0007669"/>
    <property type="project" value="UniProtKB-UniRule"/>
</dbReference>
<dbReference type="GO" id="GO:0006434">
    <property type="term" value="P:seryl-tRNA aminoacylation"/>
    <property type="evidence" value="ECO:0007669"/>
    <property type="project" value="UniProtKB-UniRule"/>
</dbReference>
<dbReference type="CDD" id="cd00770">
    <property type="entry name" value="SerRS_core"/>
    <property type="match status" value="1"/>
</dbReference>
<dbReference type="FunFam" id="3.30.930.10:FF:000048">
    <property type="entry name" value="Serine--tRNA ligase"/>
    <property type="match status" value="1"/>
</dbReference>
<dbReference type="Gene3D" id="3.30.930.10">
    <property type="entry name" value="Bira Bifunctional Protein, Domain 2"/>
    <property type="match status" value="1"/>
</dbReference>
<dbReference type="Gene3D" id="1.10.287.40">
    <property type="entry name" value="Serine-tRNA synthetase, tRNA binding domain"/>
    <property type="match status" value="1"/>
</dbReference>
<dbReference type="HAMAP" id="MF_00176">
    <property type="entry name" value="Ser_tRNA_synth_type1"/>
    <property type="match status" value="1"/>
</dbReference>
<dbReference type="InterPro" id="IPR002314">
    <property type="entry name" value="aa-tRNA-synt_IIb"/>
</dbReference>
<dbReference type="InterPro" id="IPR006195">
    <property type="entry name" value="aa-tRNA-synth_II"/>
</dbReference>
<dbReference type="InterPro" id="IPR045864">
    <property type="entry name" value="aa-tRNA-synth_II/BPL/LPL"/>
</dbReference>
<dbReference type="InterPro" id="IPR002317">
    <property type="entry name" value="Ser-tRNA-ligase_type_1"/>
</dbReference>
<dbReference type="InterPro" id="IPR015866">
    <property type="entry name" value="Ser-tRNA-synth_1_N"/>
</dbReference>
<dbReference type="InterPro" id="IPR042103">
    <property type="entry name" value="SerRS_1_N_sf"/>
</dbReference>
<dbReference type="InterPro" id="IPR033729">
    <property type="entry name" value="SerRS_core"/>
</dbReference>
<dbReference type="InterPro" id="IPR010978">
    <property type="entry name" value="tRNA-bd_arm"/>
</dbReference>
<dbReference type="NCBIfam" id="TIGR00414">
    <property type="entry name" value="serS"/>
    <property type="match status" value="1"/>
</dbReference>
<dbReference type="PANTHER" id="PTHR11778">
    <property type="entry name" value="SERYL-TRNA SYNTHETASE"/>
    <property type="match status" value="1"/>
</dbReference>
<dbReference type="Pfam" id="PF02403">
    <property type="entry name" value="Seryl_tRNA_N"/>
    <property type="match status" value="1"/>
</dbReference>
<dbReference type="Pfam" id="PF00587">
    <property type="entry name" value="tRNA-synt_2b"/>
    <property type="match status" value="1"/>
</dbReference>
<dbReference type="PIRSF" id="PIRSF001529">
    <property type="entry name" value="Ser-tRNA-synth_IIa"/>
    <property type="match status" value="1"/>
</dbReference>
<dbReference type="PRINTS" id="PR00981">
    <property type="entry name" value="TRNASYNTHSER"/>
</dbReference>
<dbReference type="SUPFAM" id="SSF55681">
    <property type="entry name" value="Class II aaRS and biotin synthetases"/>
    <property type="match status" value="1"/>
</dbReference>
<dbReference type="SUPFAM" id="SSF46589">
    <property type="entry name" value="tRNA-binding arm"/>
    <property type="match status" value="1"/>
</dbReference>
<dbReference type="PROSITE" id="PS50862">
    <property type="entry name" value="AA_TRNA_LIGASE_II"/>
    <property type="match status" value="1"/>
</dbReference>
<gene>
    <name evidence="1" type="primary">serS</name>
    <name type="ordered locus">PH0710</name>
    <name type="ORF">PHCF014</name>
</gene>
<comment type="function">
    <text evidence="1">Catalyzes the attachment of serine to tRNA(Ser). Is also able to aminoacylate tRNA(Sec) with serine, to form the misacylated tRNA L-seryl-tRNA(Sec), which will be further converted into selenocysteinyl-tRNA(Sec).</text>
</comment>
<comment type="catalytic activity">
    <reaction evidence="1">
        <text>tRNA(Ser) + L-serine + ATP = L-seryl-tRNA(Ser) + AMP + diphosphate + H(+)</text>
        <dbReference type="Rhea" id="RHEA:12292"/>
        <dbReference type="Rhea" id="RHEA-COMP:9669"/>
        <dbReference type="Rhea" id="RHEA-COMP:9703"/>
        <dbReference type="ChEBI" id="CHEBI:15378"/>
        <dbReference type="ChEBI" id="CHEBI:30616"/>
        <dbReference type="ChEBI" id="CHEBI:33019"/>
        <dbReference type="ChEBI" id="CHEBI:33384"/>
        <dbReference type="ChEBI" id="CHEBI:78442"/>
        <dbReference type="ChEBI" id="CHEBI:78533"/>
        <dbReference type="ChEBI" id="CHEBI:456215"/>
        <dbReference type="EC" id="6.1.1.11"/>
    </reaction>
</comment>
<comment type="catalytic activity">
    <reaction evidence="1">
        <text>tRNA(Sec) + L-serine + ATP = L-seryl-tRNA(Sec) + AMP + diphosphate + H(+)</text>
        <dbReference type="Rhea" id="RHEA:42580"/>
        <dbReference type="Rhea" id="RHEA-COMP:9742"/>
        <dbReference type="Rhea" id="RHEA-COMP:10128"/>
        <dbReference type="ChEBI" id="CHEBI:15378"/>
        <dbReference type="ChEBI" id="CHEBI:30616"/>
        <dbReference type="ChEBI" id="CHEBI:33019"/>
        <dbReference type="ChEBI" id="CHEBI:33384"/>
        <dbReference type="ChEBI" id="CHEBI:78442"/>
        <dbReference type="ChEBI" id="CHEBI:78533"/>
        <dbReference type="ChEBI" id="CHEBI:456215"/>
        <dbReference type="EC" id="6.1.1.11"/>
    </reaction>
</comment>
<comment type="pathway">
    <text evidence="1">Aminoacyl-tRNA biosynthesis; selenocysteinyl-tRNA(Sec) biosynthesis; L-seryl-tRNA(Sec) from L-serine and tRNA(Sec): step 1/1.</text>
</comment>
<comment type="subunit">
    <text evidence="1">Homodimer. The tRNA molecule binds across the dimer.</text>
</comment>
<comment type="subcellular location">
    <subcellularLocation>
        <location evidence="1">Cytoplasm</location>
    </subcellularLocation>
</comment>
<comment type="domain">
    <text evidence="1">Consists of two distinct domains, a catalytic core and a N-terminal extension that is involved in tRNA binding.</text>
</comment>
<comment type="similarity">
    <text evidence="1">Belongs to the class-II aminoacyl-tRNA synthetase family. Type-1 seryl-tRNA synthetase subfamily.</text>
</comment>
<comment type="sequence caution" evidence="2">
    <conflict type="erroneous initiation">
        <sequence resource="EMBL-CDS" id="BAA29801"/>
    </conflict>
</comment>